<dbReference type="EMBL" id="AE014297">
    <property type="protein sequence ID" value="AAF55852.1"/>
    <property type="molecule type" value="Genomic_DNA"/>
</dbReference>
<dbReference type="EMBL" id="BT011371">
    <property type="protein sequence ID" value="AAR96163.1"/>
    <property type="molecule type" value="mRNA"/>
</dbReference>
<dbReference type="RefSeq" id="NP_650943.1">
    <property type="nucleotide sequence ID" value="NM_142686.3"/>
</dbReference>
<dbReference type="PDB" id="4IT4">
    <property type="method" value="X-ray"/>
    <property type="resolution" value="2.50 A"/>
    <property type="chains" value="A/B/C/D/E/F=1-211"/>
</dbReference>
<dbReference type="PDB" id="4IT6">
    <property type="method" value="X-ray"/>
    <property type="resolution" value="1.90 A"/>
    <property type="chains" value="A/B=1-120"/>
</dbReference>
<dbReference type="PDBsum" id="4IT4"/>
<dbReference type="PDBsum" id="4IT6"/>
<dbReference type="SMR" id="Q9VDE4"/>
<dbReference type="FunCoup" id="Q9VDE4">
    <property type="interactions" value="177"/>
</dbReference>
<dbReference type="STRING" id="7227.FBpp0083435"/>
<dbReference type="PaxDb" id="7227-FBpp0083435"/>
<dbReference type="DNASU" id="42503"/>
<dbReference type="EnsemblMetazoa" id="FBtr0084033">
    <property type="protein sequence ID" value="FBpp0083435"/>
    <property type="gene ID" value="FBgn0038857"/>
</dbReference>
<dbReference type="GeneID" id="42503"/>
<dbReference type="KEGG" id="dme:Dmel_CG17282"/>
<dbReference type="UCSC" id="CG17282-RA">
    <property type="organism name" value="d. melanogaster"/>
</dbReference>
<dbReference type="AGR" id="FB:FBgn0038857"/>
<dbReference type="CTD" id="42503"/>
<dbReference type="FlyBase" id="FBgn0038857">
    <property type="gene designation" value="Bdbt"/>
</dbReference>
<dbReference type="VEuPathDB" id="VectorBase:FBgn0038857"/>
<dbReference type="eggNOG" id="ENOG502SFXB">
    <property type="taxonomic scope" value="Eukaryota"/>
</dbReference>
<dbReference type="HOGENOM" id="CLU_974077_0_0_1"/>
<dbReference type="InParanoid" id="Q9VDE4"/>
<dbReference type="OMA" id="WYVGTEW"/>
<dbReference type="OrthoDB" id="433738at2759"/>
<dbReference type="BioGRID-ORCS" id="42503">
    <property type="hits" value="1 hit in 1 CRISPR screen"/>
</dbReference>
<dbReference type="EvolutionaryTrace" id="Q9VDE4"/>
<dbReference type="GenomeRNAi" id="42503"/>
<dbReference type="PRO" id="PR:Q9VDE4"/>
<dbReference type="Proteomes" id="UP000000803">
    <property type="component" value="Chromosome 3R"/>
</dbReference>
<dbReference type="Bgee" id="FBgn0038857">
    <property type="expression patterns" value="Expressed in adult anterior midgut class I enteroendocrine cell in adult midgut (Drosophila) and 58 other cell types or tissues"/>
</dbReference>
<dbReference type="GO" id="GO:0005829">
    <property type="term" value="C:cytosol"/>
    <property type="evidence" value="ECO:0000314"/>
    <property type="project" value="UniProtKB"/>
</dbReference>
<dbReference type="GO" id="GO:0005886">
    <property type="term" value="C:plasma membrane"/>
    <property type="evidence" value="ECO:0007669"/>
    <property type="project" value="UniProtKB-SubCell"/>
</dbReference>
<dbReference type="GO" id="GO:0019209">
    <property type="term" value="F:kinase activator activity"/>
    <property type="evidence" value="ECO:0000314"/>
    <property type="project" value="FlyBase"/>
</dbReference>
<dbReference type="GO" id="GO:0045475">
    <property type="term" value="P:locomotor rhythm"/>
    <property type="evidence" value="ECO:0000315"/>
    <property type="project" value="FlyBase"/>
</dbReference>
<dbReference type="GO" id="GO:0090175">
    <property type="term" value="P:regulation of establishment of planar polarity"/>
    <property type="evidence" value="ECO:0000315"/>
    <property type="project" value="FlyBase"/>
</dbReference>
<dbReference type="GO" id="GO:0033157">
    <property type="term" value="P:regulation of intracellular protein transport"/>
    <property type="evidence" value="ECO:0000315"/>
    <property type="project" value="UniProtKB"/>
</dbReference>
<dbReference type="GO" id="GO:1901873">
    <property type="term" value="P:regulation of post-translational protein modification"/>
    <property type="evidence" value="ECO:0000315"/>
    <property type="project" value="FlyBase"/>
</dbReference>
<dbReference type="GO" id="GO:0042176">
    <property type="term" value="P:regulation of protein catabolic process"/>
    <property type="evidence" value="ECO:0000315"/>
    <property type="project" value="FlyBase"/>
</dbReference>
<dbReference type="FunFam" id="1.20.58.80:FF:000050">
    <property type="entry name" value="Bride of doubletime"/>
    <property type="match status" value="1"/>
</dbReference>
<dbReference type="FunFam" id="2.40.30.320:FF:000001">
    <property type="entry name" value="Bride of doubletime"/>
    <property type="match status" value="1"/>
</dbReference>
<dbReference type="Gene3D" id="2.40.30.320">
    <property type="match status" value="1"/>
</dbReference>
<dbReference type="Gene3D" id="1.20.58.80">
    <property type="entry name" value="Phosphotransferase system, lactose/cellobiose-type IIA subunit"/>
    <property type="match status" value="1"/>
</dbReference>
<dbReference type="InterPro" id="IPR048919">
    <property type="entry name" value="Bdbt-like_TPR"/>
</dbReference>
<dbReference type="InterPro" id="IPR050754">
    <property type="entry name" value="FKBP4/5/8-like"/>
</dbReference>
<dbReference type="InterPro" id="IPR040478">
    <property type="entry name" value="FKBP_N_2"/>
</dbReference>
<dbReference type="InterPro" id="IPR011990">
    <property type="entry name" value="TPR-like_helical_dom_sf"/>
</dbReference>
<dbReference type="PANTHER" id="PTHR46512:SF10">
    <property type="entry name" value="FK506-BINDING PROTEIN-LIKE"/>
    <property type="match status" value="1"/>
</dbReference>
<dbReference type="PANTHER" id="PTHR46512">
    <property type="entry name" value="PEPTIDYLPROLYL ISOMERASE"/>
    <property type="match status" value="1"/>
</dbReference>
<dbReference type="Pfam" id="PF21603">
    <property type="entry name" value="Bdbt-like_TPR"/>
    <property type="match status" value="1"/>
</dbReference>
<dbReference type="Pfam" id="PF18023">
    <property type="entry name" value="FKBP_N_2"/>
    <property type="match status" value="1"/>
</dbReference>
<dbReference type="SUPFAM" id="SSF48452">
    <property type="entry name" value="TPR-like"/>
    <property type="match status" value="1"/>
</dbReference>
<feature type="chain" id="PRO_0000459437" description="Protein Bride of doubletime">
    <location>
        <begin position="1"/>
        <end position="286"/>
    </location>
</feature>
<feature type="strand" evidence="13">
    <location>
        <begin position="8"/>
        <end position="11"/>
    </location>
</feature>
<feature type="turn" evidence="13">
    <location>
        <begin position="12"/>
        <end position="15"/>
    </location>
</feature>
<feature type="strand" evidence="13">
    <location>
        <begin position="16"/>
        <end position="23"/>
    </location>
</feature>
<feature type="helix" evidence="13">
    <location>
        <begin position="27"/>
        <end position="29"/>
    </location>
</feature>
<feature type="strand" evidence="13">
    <location>
        <begin position="36"/>
        <end position="41"/>
    </location>
</feature>
<feature type="turn" evidence="12">
    <location>
        <begin position="54"/>
        <end position="56"/>
    </location>
</feature>
<feature type="strand" evidence="13">
    <location>
        <begin position="64"/>
        <end position="71"/>
    </location>
</feature>
<feature type="helix" evidence="13">
    <location>
        <begin position="78"/>
        <end position="87"/>
    </location>
</feature>
<feature type="strand" evidence="13">
    <location>
        <begin position="94"/>
        <end position="101"/>
    </location>
</feature>
<feature type="strand" evidence="13">
    <location>
        <begin position="107"/>
        <end position="117"/>
    </location>
</feature>
<feature type="helix" evidence="12">
    <location>
        <begin position="123"/>
        <end position="125"/>
    </location>
</feature>
<feature type="helix" evidence="12">
    <location>
        <begin position="128"/>
        <end position="144"/>
    </location>
</feature>
<feature type="turn" evidence="12">
    <location>
        <begin position="145"/>
        <end position="148"/>
    </location>
</feature>
<feature type="helix" evidence="12">
    <location>
        <begin position="150"/>
        <end position="164"/>
    </location>
</feature>
<feature type="helix" evidence="12">
    <location>
        <begin position="165"/>
        <end position="167"/>
    </location>
</feature>
<feature type="helix" evidence="12">
    <location>
        <begin position="175"/>
        <end position="178"/>
    </location>
</feature>
<feature type="helix" evidence="12">
    <location>
        <begin position="182"/>
        <end position="205"/>
    </location>
</feature>
<feature type="turn" evidence="12">
    <location>
        <begin position="206"/>
        <end position="208"/>
    </location>
</feature>
<protein>
    <recommendedName>
        <fullName evidence="5">Protein Bride of doubletime</fullName>
    </recommendedName>
</protein>
<keyword id="KW-0002">3D-structure</keyword>
<keyword id="KW-1003">Cell membrane</keyword>
<keyword id="KW-0963">Cytoplasm</keyword>
<keyword id="KW-0217">Developmental protein</keyword>
<keyword id="KW-0472">Membrane</keyword>
<keyword id="KW-1185">Reference proteome</keyword>
<comment type="function">
    <text evidence="1 2 3 4">Functions in planar polarity establishment and circadian rhythms by promoting the activity and localization of dco/dbt (PubMed:24210908, PubMed:26082158, PubMed:36994075). Required for regulating the levels of dco/dbt and per in the nuclei of photoreceptor cells and thereby is involved in normal oscillations of the circadian clock proteins in the eye (PubMed:24210908, PubMed:36994075). In the dark, the cry circadian and rhodopsin visual pathways, activate the accumulation of the protein into Arr1- and Arr2-dependent cytosolic foci which are required for dco localization to photoreceptor nuclei (PubMed:24210908, PubMed:26082158, PubMed:36994075). It is possible that the accumulation into foci results in the dissociation of the protein from dco, thus allowing dco to interact with importins and microtubles for nuclear transport (PubMed:24210908, PubMed:26082158, PubMed:36994075). By promoting nuclei localization and kinase activity of dco towards per, it is essential for regulating normal cycles of per nuclear accumulation in brain circadian neurons and thus is important for normal circadian behavior (PubMed:24210908, PubMed:36994075). Essential for regulating the establishment of planar cell polarity in the wing (PubMed:32750048). Forms a complex with Ankrd49 which likely functions in the regulation of planar polarity by promoting the activity of dco during planar polarity establishment (PubMed:32750048). Within the complex, directly promotes dco activity in regulating phosphorylation and asymmetric localization of core planar polarity proteins such as dsh (PubMed:32750048).</text>
</comment>
<comment type="subunit">
    <text evidence="1 2 3">Interacts with dco (via nuclear localization signal) (PubMed:24210908, PubMed:26082158). Interacts with Ankrd49; interaction promotes the stability of both complex members (PubMed:32750048).</text>
</comment>
<comment type="subcellular location">
    <subcellularLocation>
        <location evidence="1 3 4">Cytoplasm</location>
        <location evidence="1 3 4">Cytosol</location>
    </subcellularLocation>
    <subcellularLocation>
        <location evidence="3">Cell membrane</location>
        <topology evidence="3">Peripheral membrane protein</topology>
        <orientation evidence="3">Cytoplasmic side</orientation>
    </subcellularLocation>
    <text evidence="1 4">During the dark period, forms discrete cytosolic foci in photoreceptor cells (PubMed:24210908, PubMed:36994075). During the day (ZT1 and ZT7), detection is limited to the outer part of the retina and does not occur in all photoreceptors (PubMed:36994075). At early night (ZT13), the foci increase in number and are broadly localized in the retina, and by ZT19 most photoreceptors express high levels of the foci in both the inner and outer parts of the retina (PubMed:36994075). Under conditions of constant darkness, foci accumulation is high and broad in photoreceptor cells (PubMed:36994075). Under conditions of constant light, foci accumulation is low and are restricted to 'finger-like' projections in the retina, appearing to be mostly localized to the Rh3 cell cytosol adjacent to the rhabdomeres (PubMed:36994075).</text>
</comment>
<comment type="disruption phenotype">
    <text evidence="1 3 4">Lethal (PubMed:32750048). RNAi-mediated knockdown in the wing disrupts cell polarity (PubMed:32750048). RNAi-mediated knockdown in clock cells, results in behavioral arrhythmicity and long periods (PubMed:24210908). RNAi-mediated knockdown in the eye disrupts oscillations in the subcellular localizations of per and dco, leading to constitutively nuclear per and constitutively cytosolic dco in photoreceptor cells (PubMed:36994075).</text>
</comment>
<sequence length="286" mass="32968">MDWYVGTEWEDKNRGLAKKVIGLQFTEMDKPTIISTVEFSVNKKATNLGGRPSKYLVSDESATYPQKHSLEMGTSLTAVDCYLELLLQQFVPGETAACSITTKTGERIEFELKLEKIVKNTQVEKLSAAEIYEVALRLKESGVATFKTFPKFAFDYFVRAAKLLITYKPFDKLTKKTNGINGQAVEELFIQIQTNLAACLLQEKRYEHVIYHTQFVETEESPSEKSIYRRALAYYHLKEFAKAQATIERMPNYEEKREFSKLRDNIAVSWKDSKAHYKEVVQRMFS</sequence>
<gene>
    <name evidence="5 8" type="primary">Bdbt</name>
    <name evidence="8" type="ORF">CG17282</name>
</gene>
<organism evidence="9">
    <name type="scientific">Drosophila melanogaster</name>
    <name type="common">Fruit fly</name>
    <dbReference type="NCBI Taxonomy" id="7227"/>
    <lineage>
        <taxon>Eukaryota</taxon>
        <taxon>Metazoa</taxon>
        <taxon>Ecdysozoa</taxon>
        <taxon>Arthropoda</taxon>
        <taxon>Hexapoda</taxon>
        <taxon>Insecta</taxon>
        <taxon>Pterygota</taxon>
        <taxon>Neoptera</taxon>
        <taxon>Endopterygota</taxon>
        <taxon>Diptera</taxon>
        <taxon>Brachycera</taxon>
        <taxon>Muscomorpha</taxon>
        <taxon>Ephydroidea</taxon>
        <taxon>Drosophilidae</taxon>
        <taxon>Drosophila</taxon>
        <taxon>Sophophora</taxon>
    </lineage>
</organism>
<proteinExistence type="evidence at protein level"/>
<name>BDBT_DROME</name>
<accession>Q9VDE4</accession>
<evidence type="ECO:0000269" key="1">
    <source>
    </source>
</evidence>
<evidence type="ECO:0000269" key="2">
    <source>
    </source>
</evidence>
<evidence type="ECO:0000269" key="3">
    <source>
    </source>
</evidence>
<evidence type="ECO:0000269" key="4">
    <source>
    </source>
</evidence>
<evidence type="ECO:0000303" key="5">
    <source>
    </source>
</evidence>
<evidence type="ECO:0000305" key="6"/>
<evidence type="ECO:0000312" key="7">
    <source>
        <dbReference type="EMBL" id="AAR96163.1"/>
    </source>
</evidence>
<evidence type="ECO:0000312" key="8">
    <source>
        <dbReference type="FlyBase" id="FBgn0038857"/>
    </source>
</evidence>
<evidence type="ECO:0000312" key="9">
    <source>
        <dbReference type="Proteomes" id="UP000000803"/>
    </source>
</evidence>
<evidence type="ECO:0007744" key="10">
    <source>
        <dbReference type="PDB" id="4IT4"/>
    </source>
</evidence>
<evidence type="ECO:0007744" key="11">
    <source>
        <dbReference type="PDB" id="4IT6"/>
    </source>
</evidence>
<evidence type="ECO:0007829" key="12">
    <source>
        <dbReference type="PDB" id="4IT4"/>
    </source>
</evidence>
<evidence type="ECO:0007829" key="13">
    <source>
        <dbReference type="PDB" id="4IT6"/>
    </source>
</evidence>
<reference evidence="9" key="1">
    <citation type="journal article" date="2000" name="Science">
        <title>The genome sequence of Drosophila melanogaster.</title>
        <authorList>
            <person name="Adams M.D."/>
            <person name="Celniker S.E."/>
            <person name="Holt R.A."/>
            <person name="Evans C.A."/>
            <person name="Gocayne J.D."/>
            <person name="Amanatides P.G."/>
            <person name="Scherer S.E."/>
            <person name="Li P.W."/>
            <person name="Hoskins R.A."/>
            <person name="Galle R.F."/>
            <person name="George R.A."/>
            <person name="Lewis S.E."/>
            <person name="Richards S."/>
            <person name="Ashburner M."/>
            <person name="Henderson S.N."/>
            <person name="Sutton G.G."/>
            <person name="Wortman J.R."/>
            <person name="Yandell M.D."/>
            <person name="Zhang Q."/>
            <person name="Chen L.X."/>
            <person name="Brandon R.C."/>
            <person name="Rogers Y.-H.C."/>
            <person name="Blazej R.G."/>
            <person name="Champe M."/>
            <person name="Pfeiffer B.D."/>
            <person name="Wan K.H."/>
            <person name="Doyle C."/>
            <person name="Baxter E.G."/>
            <person name="Helt G."/>
            <person name="Nelson C.R."/>
            <person name="Miklos G.L.G."/>
            <person name="Abril J.F."/>
            <person name="Agbayani A."/>
            <person name="An H.-J."/>
            <person name="Andrews-Pfannkoch C."/>
            <person name="Baldwin D."/>
            <person name="Ballew R.M."/>
            <person name="Basu A."/>
            <person name="Baxendale J."/>
            <person name="Bayraktaroglu L."/>
            <person name="Beasley E.M."/>
            <person name="Beeson K.Y."/>
            <person name="Benos P.V."/>
            <person name="Berman B.P."/>
            <person name="Bhandari D."/>
            <person name="Bolshakov S."/>
            <person name="Borkova D."/>
            <person name="Botchan M.R."/>
            <person name="Bouck J."/>
            <person name="Brokstein P."/>
            <person name="Brottier P."/>
            <person name="Burtis K.C."/>
            <person name="Busam D.A."/>
            <person name="Butler H."/>
            <person name="Cadieu E."/>
            <person name="Center A."/>
            <person name="Chandra I."/>
            <person name="Cherry J.M."/>
            <person name="Cawley S."/>
            <person name="Dahlke C."/>
            <person name="Davenport L.B."/>
            <person name="Davies P."/>
            <person name="de Pablos B."/>
            <person name="Delcher A."/>
            <person name="Deng Z."/>
            <person name="Mays A.D."/>
            <person name="Dew I."/>
            <person name="Dietz S.M."/>
            <person name="Dodson K."/>
            <person name="Doup L.E."/>
            <person name="Downes M."/>
            <person name="Dugan-Rocha S."/>
            <person name="Dunkov B.C."/>
            <person name="Dunn P."/>
            <person name="Durbin K.J."/>
            <person name="Evangelista C.C."/>
            <person name="Ferraz C."/>
            <person name="Ferriera S."/>
            <person name="Fleischmann W."/>
            <person name="Fosler C."/>
            <person name="Gabrielian A.E."/>
            <person name="Garg N.S."/>
            <person name="Gelbart W.M."/>
            <person name="Glasser K."/>
            <person name="Glodek A."/>
            <person name="Gong F."/>
            <person name="Gorrell J.H."/>
            <person name="Gu Z."/>
            <person name="Guan P."/>
            <person name="Harris M."/>
            <person name="Harris N.L."/>
            <person name="Harvey D.A."/>
            <person name="Heiman T.J."/>
            <person name="Hernandez J.R."/>
            <person name="Houck J."/>
            <person name="Hostin D."/>
            <person name="Houston K.A."/>
            <person name="Howland T.J."/>
            <person name="Wei M.-H."/>
            <person name="Ibegwam C."/>
            <person name="Jalali M."/>
            <person name="Kalush F."/>
            <person name="Karpen G.H."/>
            <person name="Ke Z."/>
            <person name="Kennison J.A."/>
            <person name="Ketchum K.A."/>
            <person name="Kimmel B.E."/>
            <person name="Kodira C.D."/>
            <person name="Kraft C.L."/>
            <person name="Kravitz S."/>
            <person name="Kulp D."/>
            <person name="Lai Z."/>
            <person name="Lasko P."/>
            <person name="Lei Y."/>
            <person name="Levitsky A.A."/>
            <person name="Li J.H."/>
            <person name="Li Z."/>
            <person name="Liang Y."/>
            <person name="Lin X."/>
            <person name="Liu X."/>
            <person name="Mattei B."/>
            <person name="McIntosh T.C."/>
            <person name="McLeod M.P."/>
            <person name="McPherson D."/>
            <person name="Merkulov G."/>
            <person name="Milshina N.V."/>
            <person name="Mobarry C."/>
            <person name="Morris J."/>
            <person name="Moshrefi A."/>
            <person name="Mount S.M."/>
            <person name="Moy M."/>
            <person name="Murphy B."/>
            <person name="Murphy L."/>
            <person name="Muzny D.M."/>
            <person name="Nelson D.L."/>
            <person name="Nelson D.R."/>
            <person name="Nelson K.A."/>
            <person name="Nixon K."/>
            <person name="Nusskern D.R."/>
            <person name="Pacleb J.M."/>
            <person name="Palazzolo M."/>
            <person name="Pittman G.S."/>
            <person name="Pan S."/>
            <person name="Pollard J."/>
            <person name="Puri V."/>
            <person name="Reese M.G."/>
            <person name="Reinert K."/>
            <person name="Remington K."/>
            <person name="Saunders R.D.C."/>
            <person name="Scheeler F."/>
            <person name="Shen H."/>
            <person name="Shue B.C."/>
            <person name="Siden-Kiamos I."/>
            <person name="Simpson M."/>
            <person name="Skupski M.P."/>
            <person name="Smith T.J."/>
            <person name="Spier E."/>
            <person name="Spradling A.C."/>
            <person name="Stapleton M."/>
            <person name="Strong R."/>
            <person name="Sun E."/>
            <person name="Svirskas R."/>
            <person name="Tector C."/>
            <person name="Turner R."/>
            <person name="Venter E."/>
            <person name="Wang A.H."/>
            <person name="Wang X."/>
            <person name="Wang Z.-Y."/>
            <person name="Wassarman D.A."/>
            <person name="Weinstock G.M."/>
            <person name="Weissenbach J."/>
            <person name="Williams S.M."/>
            <person name="Woodage T."/>
            <person name="Worley K.C."/>
            <person name="Wu D."/>
            <person name="Yang S."/>
            <person name="Yao Q.A."/>
            <person name="Ye J."/>
            <person name="Yeh R.-F."/>
            <person name="Zaveri J.S."/>
            <person name="Zhan M."/>
            <person name="Zhang G."/>
            <person name="Zhao Q."/>
            <person name="Zheng L."/>
            <person name="Zheng X.H."/>
            <person name="Zhong F.N."/>
            <person name="Zhong W."/>
            <person name="Zhou X."/>
            <person name="Zhu S.C."/>
            <person name="Zhu X."/>
            <person name="Smith H.O."/>
            <person name="Gibbs R.A."/>
            <person name="Myers E.W."/>
            <person name="Rubin G.M."/>
            <person name="Venter J.C."/>
        </authorList>
    </citation>
    <scope>NUCLEOTIDE SEQUENCE [LARGE SCALE GENOMIC DNA]</scope>
    <source>
        <strain>Berkeley</strain>
    </source>
</reference>
<reference evidence="9" key="2">
    <citation type="journal article" date="2002" name="Genome Biol.">
        <title>Annotation of the Drosophila melanogaster euchromatic genome: a systematic review.</title>
        <authorList>
            <person name="Misra S."/>
            <person name="Crosby M.A."/>
            <person name="Mungall C.J."/>
            <person name="Matthews B.B."/>
            <person name="Campbell K.S."/>
            <person name="Hradecky P."/>
            <person name="Huang Y."/>
            <person name="Kaminker J.S."/>
            <person name="Millburn G.H."/>
            <person name="Prochnik S.E."/>
            <person name="Smith C.D."/>
            <person name="Tupy J.L."/>
            <person name="Whitfield E.J."/>
            <person name="Bayraktaroglu L."/>
            <person name="Berman B.P."/>
            <person name="Bettencourt B.R."/>
            <person name="Celniker S.E."/>
            <person name="de Grey A.D.N.J."/>
            <person name="Drysdale R.A."/>
            <person name="Harris N.L."/>
            <person name="Richter J."/>
            <person name="Russo S."/>
            <person name="Schroeder A.J."/>
            <person name="Shu S.Q."/>
            <person name="Stapleton M."/>
            <person name="Yamada C."/>
            <person name="Ashburner M."/>
            <person name="Gelbart W.M."/>
            <person name="Rubin G.M."/>
            <person name="Lewis S.E."/>
        </authorList>
    </citation>
    <scope>GENOME REANNOTATION</scope>
    <source>
        <strain>Berkeley</strain>
    </source>
</reference>
<reference evidence="7" key="3">
    <citation type="submission" date="2004-01" db="EMBL/GenBank/DDBJ databases">
        <authorList>
            <person name="Stapleton M."/>
            <person name="Carlson J."/>
            <person name="Chavez C."/>
            <person name="Frise E."/>
            <person name="George R."/>
            <person name="Pacleb J."/>
            <person name="Park S."/>
            <person name="Wan K."/>
            <person name="Yu C."/>
            <person name="Rubin G.M."/>
            <person name="Celniker S."/>
        </authorList>
    </citation>
    <scope>NUCLEOTIDE SEQUENCE [LARGE SCALE MRNA]</scope>
    <source>
        <strain evidence="7">Berkeley</strain>
        <tissue evidence="7">Embryo</tissue>
    </source>
</reference>
<reference evidence="6" key="4">
    <citation type="journal article" date="2015" name="J. Biol. Rhythms">
        <title>A Doubletime Nuclear Localization Signal Mediates an Interaction with Bride of Doubletime to Promote Circadian Function.</title>
        <authorList>
            <person name="Venkatesan A."/>
            <person name="Fan J.Y."/>
            <person name="Nauman C."/>
            <person name="Price J.L."/>
        </authorList>
    </citation>
    <scope>FUNCTION</scope>
    <scope>INTERACTION WITH DCO</scope>
</reference>
<reference evidence="6" key="5">
    <citation type="journal article" date="2020" name="PLoS Genet.">
        <title>DAnkrd49 and Bdbt act via Casein kinase Iepsilon to regulate planar polarity in Drosophila.</title>
        <authorList>
            <person name="Strutt H."/>
            <person name="Strutt D."/>
        </authorList>
    </citation>
    <scope>FUNCTION</scope>
    <scope>INTERACTION WITH ANKRD49</scope>
    <scope>SUBCELLULAR LOCATION</scope>
    <scope>DISRUPTION PHENOTYPE</scope>
</reference>
<reference evidence="6" key="6">
    <citation type="journal article" date="2023" name="IScience">
        <title>Visual and circadian regulation of Drosophila BDBT and BDBT effects on DBT and PER localization.</title>
        <authorList>
            <person name="Nolan R.B."/>
            <person name="Bontrager C."/>
            <person name="Bowser A."/>
            <person name="Corley A."/>
            <person name="Fiedler H."/>
            <person name="Flathers C."/>
            <person name="Francis L."/>
            <person name="Le A."/>
            <person name="Mahmoudjafari S."/>
            <person name="Nim T."/>
            <person name="Muolo C.E."/>
            <person name="Shores B."/>
            <person name="Viermann C."/>
            <person name="Waldren A."/>
            <person name="Zatezalo C."/>
            <person name="Fan J.Y."/>
            <person name="Price J.L."/>
        </authorList>
    </citation>
    <scope>FUNCTION</scope>
    <scope>SUBCELLULAR LOCATION</scope>
    <scope>DISRUPTION PHENOTYPE</scope>
</reference>
<reference evidence="10 11" key="7">
    <citation type="journal article" date="2013" name="Neuron">
        <title>Noncanonical FK506-binding protein BDBT binds DBT to enhance its circadian function and forms foci at night.</title>
        <authorList>
            <person name="Fan J.Y."/>
            <person name="Agyekum B."/>
            <person name="Venkatesan A."/>
            <person name="Hall D.R."/>
            <person name="Keightley A."/>
            <person name="Bjes E.S."/>
            <person name="Bouyain S."/>
            <person name="Price J.L."/>
        </authorList>
    </citation>
    <scope>X-RAY CRYSTALLOGRAPHY (1.90 ANGSTROMS) OF 1-120</scope>
    <scope>FUNCTION</scope>
    <scope>INTERACTION WITH DCO</scope>
    <scope>SUBCELLULAR LOCATION</scope>
    <scope>DISRUPTION PHENOTYPE</scope>
</reference>